<keyword id="KW-0067">ATP-binding</keyword>
<keyword id="KW-0418">Kinase</keyword>
<keyword id="KW-0547">Nucleotide-binding</keyword>
<keyword id="KW-0597">Phosphoprotein</keyword>
<keyword id="KW-1185">Reference proteome</keyword>
<keyword id="KW-0808">Transferase</keyword>
<accession>Q12QM6</accession>
<reference key="1">
    <citation type="submission" date="2006-03" db="EMBL/GenBank/DDBJ databases">
        <title>Complete sequence of Shewanella denitrificans OS217.</title>
        <authorList>
            <consortium name="US DOE Joint Genome Institute"/>
            <person name="Copeland A."/>
            <person name="Lucas S."/>
            <person name="Lapidus A."/>
            <person name="Barry K."/>
            <person name="Detter J.C."/>
            <person name="Glavina del Rio T."/>
            <person name="Hammon N."/>
            <person name="Israni S."/>
            <person name="Dalin E."/>
            <person name="Tice H."/>
            <person name="Pitluck S."/>
            <person name="Brettin T."/>
            <person name="Bruce D."/>
            <person name="Han C."/>
            <person name="Tapia R."/>
            <person name="Gilna P."/>
            <person name="Kiss H."/>
            <person name="Schmutz J."/>
            <person name="Larimer F."/>
            <person name="Land M."/>
            <person name="Hauser L."/>
            <person name="Kyrpides N."/>
            <person name="Lykidis A."/>
            <person name="Richardson P."/>
        </authorList>
    </citation>
    <scope>NUCLEOTIDE SEQUENCE [LARGE SCALE GENOMIC DNA]</scope>
    <source>
        <strain>OS217 / ATCC BAA-1090 / DSM 15013</strain>
    </source>
</reference>
<organism>
    <name type="scientific">Shewanella denitrificans (strain OS217 / ATCC BAA-1090 / DSM 15013)</name>
    <dbReference type="NCBI Taxonomy" id="318161"/>
    <lineage>
        <taxon>Bacteria</taxon>
        <taxon>Pseudomonadati</taxon>
        <taxon>Pseudomonadota</taxon>
        <taxon>Gammaproteobacteria</taxon>
        <taxon>Alteromonadales</taxon>
        <taxon>Shewanellaceae</taxon>
        <taxon>Shewanella</taxon>
    </lineage>
</organism>
<name>CYSC_SHEDO</name>
<gene>
    <name evidence="1" type="primary">cysC</name>
    <name type="ordered locus">Sden_0962</name>
</gene>
<sequence length="205" mass="22214">MTDIVWHQHSIDQAARGAQKSQNPVLLWFTGLSGAGKSTLAGALERALFDAGFHTYLLDGDNVRHGLCKDLGFSLSDRDENLRRVGEVAKLMVDAGLVVLSAFISPTRAERDRVRALFPEGRFIEVHVSTPLSVCEARDPKGLYVKARSGEIKEFTGISSPYEAPTAAELTIDTSRGDLATQVQAMLAYLTAIEVIDANKLSALA</sequence>
<comment type="function">
    <text evidence="1">Catalyzes the synthesis of activated sulfate.</text>
</comment>
<comment type="catalytic activity">
    <reaction evidence="1">
        <text>adenosine 5'-phosphosulfate + ATP = 3'-phosphoadenylyl sulfate + ADP + H(+)</text>
        <dbReference type="Rhea" id="RHEA:24152"/>
        <dbReference type="ChEBI" id="CHEBI:15378"/>
        <dbReference type="ChEBI" id="CHEBI:30616"/>
        <dbReference type="ChEBI" id="CHEBI:58243"/>
        <dbReference type="ChEBI" id="CHEBI:58339"/>
        <dbReference type="ChEBI" id="CHEBI:456216"/>
        <dbReference type="EC" id="2.7.1.25"/>
    </reaction>
</comment>
<comment type="pathway">
    <text evidence="1">Sulfur metabolism; hydrogen sulfide biosynthesis; sulfite from sulfate: step 2/3.</text>
</comment>
<comment type="similarity">
    <text evidence="1">Belongs to the APS kinase family.</text>
</comment>
<protein>
    <recommendedName>
        <fullName evidence="1">Adenylyl-sulfate kinase</fullName>
        <ecNumber evidence="1">2.7.1.25</ecNumber>
    </recommendedName>
    <alternativeName>
        <fullName evidence="1">APS kinase</fullName>
    </alternativeName>
    <alternativeName>
        <fullName evidence="1">ATP adenosine-5'-phosphosulfate 3'-phosphotransferase</fullName>
    </alternativeName>
    <alternativeName>
        <fullName evidence="1">Adenosine-5'-phosphosulfate kinase</fullName>
    </alternativeName>
</protein>
<evidence type="ECO:0000255" key="1">
    <source>
        <dbReference type="HAMAP-Rule" id="MF_00065"/>
    </source>
</evidence>
<proteinExistence type="inferred from homology"/>
<dbReference type="EC" id="2.7.1.25" evidence="1"/>
<dbReference type="EMBL" id="CP000302">
    <property type="protein sequence ID" value="ABE54250.1"/>
    <property type="molecule type" value="Genomic_DNA"/>
</dbReference>
<dbReference type="RefSeq" id="WP_011495414.1">
    <property type="nucleotide sequence ID" value="NC_007954.1"/>
</dbReference>
<dbReference type="SMR" id="Q12QM6"/>
<dbReference type="STRING" id="318161.Sden_0962"/>
<dbReference type="KEGG" id="sdn:Sden_0962"/>
<dbReference type="eggNOG" id="COG0529">
    <property type="taxonomic scope" value="Bacteria"/>
</dbReference>
<dbReference type="HOGENOM" id="CLU_046932_1_1_6"/>
<dbReference type="OrthoDB" id="9804504at2"/>
<dbReference type="UniPathway" id="UPA00140">
    <property type="reaction ID" value="UER00205"/>
</dbReference>
<dbReference type="Proteomes" id="UP000001982">
    <property type="component" value="Chromosome"/>
</dbReference>
<dbReference type="GO" id="GO:0004020">
    <property type="term" value="F:adenylylsulfate kinase activity"/>
    <property type="evidence" value="ECO:0007669"/>
    <property type="project" value="UniProtKB-UniRule"/>
</dbReference>
<dbReference type="GO" id="GO:0005524">
    <property type="term" value="F:ATP binding"/>
    <property type="evidence" value="ECO:0007669"/>
    <property type="project" value="UniProtKB-UniRule"/>
</dbReference>
<dbReference type="GO" id="GO:0070814">
    <property type="term" value="P:hydrogen sulfide biosynthetic process"/>
    <property type="evidence" value="ECO:0007669"/>
    <property type="project" value="UniProtKB-UniRule"/>
</dbReference>
<dbReference type="GO" id="GO:0000103">
    <property type="term" value="P:sulfate assimilation"/>
    <property type="evidence" value="ECO:0007669"/>
    <property type="project" value="UniProtKB-UniRule"/>
</dbReference>
<dbReference type="CDD" id="cd02027">
    <property type="entry name" value="APSK"/>
    <property type="match status" value="1"/>
</dbReference>
<dbReference type="FunFam" id="3.40.50.300:FF:000212">
    <property type="entry name" value="Adenylyl-sulfate kinase"/>
    <property type="match status" value="1"/>
</dbReference>
<dbReference type="Gene3D" id="3.40.50.300">
    <property type="entry name" value="P-loop containing nucleotide triphosphate hydrolases"/>
    <property type="match status" value="1"/>
</dbReference>
<dbReference type="HAMAP" id="MF_00065">
    <property type="entry name" value="Adenylyl_sulf_kinase"/>
    <property type="match status" value="1"/>
</dbReference>
<dbReference type="InterPro" id="IPR002891">
    <property type="entry name" value="APS_kinase"/>
</dbReference>
<dbReference type="InterPro" id="IPR027417">
    <property type="entry name" value="P-loop_NTPase"/>
</dbReference>
<dbReference type="NCBIfam" id="TIGR00455">
    <property type="entry name" value="apsK"/>
    <property type="match status" value="1"/>
</dbReference>
<dbReference type="NCBIfam" id="NF003013">
    <property type="entry name" value="PRK03846.1"/>
    <property type="match status" value="1"/>
</dbReference>
<dbReference type="PANTHER" id="PTHR11055:SF63">
    <property type="entry name" value="ADENYLYL-SULFATE KINASE 1, CHLOROPLASTIC"/>
    <property type="match status" value="1"/>
</dbReference>
<dbReference type="PANTHER" id="PTHR11055">
    <property type="entry name" value="BIFUNCTIONAL 3'-PHOSPHOADENOSINE 5'-PHOSPHOSULFATE SYNTHASE"/>
    <property type="match status" value="1"/>
</dbReference>
<dbReference type="Pfam" id="PF01583">
    <property type="entry name" value="APS_kinase"/>
    <property type="match status" value="1"/>
</dbReference>
<dbReference type="SUPFAM" id="SSF52540">
    <property type="entry name" value="P-loop containing nucleoside triphosphate hydrolases"/>
    <property type="match status" value="1"/>
</dbReference>
<feature type="chain" id="PRO_1000009024" description="Adenylyl-sulfate kinase">
    <location>
        <begin position="1"/>
        <end position="205"/>
    </location>
</feature>
<feature type="active site" description="Phosphoserine intermediate" evidence="1">
    <location>
        <position position="105"/>
    </location>
</feature>
<feature type="binding site" evidence="1">
    <location>
        <begin position="31"/>
        <end position="38"/>
    </location>
    <ligand>
        <name>ATP</name>
        <dbReference type="ChEBI" id="CHEBI:30616"/>
    </ligand>
</feature>